<evidence type="ECO:0000255" key="1">
    <source>
        <dbReference type="HAMAP-Rule" id="MF_00415"/>
    </source>
</evidence>
<proteinExistence type="inferred from homology"/>
<dbReference type="EMBL" id="CP000085">
    <property type="protein sequence ID" value="ABC34266.1"/>
    <property type="molecule type" value="Genomic_DNA"/>
</dbReference>
<dbReference type="SMR" id="Q2T8V7"/>
<dbReference type="DNASU" id="3845136"/>
<dbReference type="KEGG" id="bte:BTH_II0190"/>
<dbReference type="HOGENOM" id="CLU_069313_0_2_4"/>
<dbReference type="Proteomes" id="UP000001930">
    <property type="component" value="Chromosome II"/>
</dbReference>
<dbReference type="GO" id="GO:0009427">
    <property type="term" value="C:bacterial-type flagellum basal body, distal rod, L ring"/>
    <property type="evidence" value="ECO:0007669"/>
    <property type="project" value="InterPro"/>
</dbReference>
<dbReference type="GO" id="GO:0009279">
    <property type="term" value="C:cell outer membrane"/>
    <property type="evidence" value="ECO:0007669"/>
    <property type="project" value="UniProtKB-SubCell"/>
</dbReference>
<dbReference type="GO" id="GO:0003774">
    <property type="term" value="F:cytoskeletal motor activity"/>
    <property type="evidence" value="ECO:0007669"/>
    <property type="project" value="InterPro"/>
</dbReference>
<dbReference type="GO" id="GO:0071973">
    <property type="term" value="P:bacterial-type flagellum-dependent cell motility"/>
    <property type="evidence" value="ECO:0007669"/>
    <property type="project" value="InterPro"/>
</dbReference>
<dbReference type="HAMAP" id="MF_00415">
    <property type="entry name" value="FlgH"/>
    <property type="match status" value="1"/>
</dbReference>
<dbReference type="InterPro" id="IPR000527">
    <property type="entry name" value="Flag_Lring"/>
</dbReference>
<dbReference type="NCBIfam" id="NF001304">
    <property type="entry name" value="PRK00249.1-4"/>
    <property type="match status" value="1"/>
</dbReference>
<dbReference type="PANTHER" id="PTHR34933">
    <property type="entry name" value="FLAGELLAR L-RING PROTEIN"/>
    <property type="match status" value="1"/>
</dbReference>
<dbReference type="PANTHER" id="PTHR34933:SF1">
    <property type="entry name" value="FLAGELLAR L-RING PROTEIN"/>
    <property type="match status" value="1"/>
</dbReference>
<dbReference type="Pfam" id="PF02107">
    <property type="entry name" value="FlgH"/>
    <property type="match status" value="1"/>
</dbReference>
<dbReference type="PRINTS" id="PR01008">
    <property type="entry name" value="FLGLRINGFLGH"/>
</dbReference>
<dbReference type="PROSITE" id="PS51257">
    <property type="entry name" value="PROKAR_LIPOPROTEIN"/>
    <property type="match status" value="1"/>
</dbReference>
<keyword id="KW-0975">Bacterial flagellum</keyword>
<keyword id="KW-0998">Cell outer membrane</keyword>
<keyword id="KW-0449">Lipoprotein</keyword>
<keyword id="KW-0472">Membrane</keyword>
<keyword id="KW-0564">Palmitate</keyword>
<keyword id="KW-0732">Signal</keyword>
<reference key="1">
    <citation type="journal article" date="2005" name="BMC Genomics">
        <title>Bacterial genome adaptation to niches: divergence of the potential virulence genes in three Burkholderia species of different survival strategies.</title>
        <authorList>
            <person name="Kim H.S."/>
            <person name="Schell M.A."/>
            <person name="Yu Y."/>
            <person name="Ulrich R.L."/>
            <person name="Sarria S.H."/>
            <person name="Nierman W.C."/>
            <person name="DeShazer D."/>
        </authorList>
    </citation>
    <scope>NUCLEOTIDE SEQUENCE [LARGE SCALE GENOMIC DNA]</scope>
    <source>
        <strain>ATCC 700388 / DSM 13276 / CCUG 48851 / CIP 106301 / E264</strain>
    </source>
</reference>
<organism>
    <name type="scientific">Burkholderia thailandensis (strain ATCC 700388 / DSM 13276 / CCUG 48851 / CIP 106301 / E264)</name>
    <dbReference type="NCBI Taxonomy" id="271848"/>
    <lineage>
        <taxon>Bacteria</taxon>
        <taxon>Pseudomonadati</taxon>
        <taxon>Pseudomonadota</taxon>
        <taxon>Betaproteobacteria</taxon>
        <taxon>Burkholderiales</taxon>
        <taxon>Burkholderiaceae</taxon>
        <taxon>Burkholderia</taxon>
        <taxon>pseudomallei group</taxon>
    </lineage>
</organism>
<comment type="function">
    <text evidence="1">Assembles around the rod to form the L-ring and probably protects the motor/basal body from shearing forces during rotation.</text>
</comment>
<comment type="subunit">
    <text evidence="1">The basal body constitutes a major portion of the flagellar organelle and consists of four rings (L,P,S, and M) mounted on a central rod.</text>
</comment>
<comment type="subcellular location">
    <subcellularLocation>
        <location evidence="1">Cell outer membrane</location>
        <topology evidence="1">Lipid-anchor</topology>
    </subcellularLocation>
    <subcellularLocation>
        <location evidence="1">Bacterial flagellum basal body</location>
    </subcellularLocation>
</comment>
<comment type="similarity">
    <text evidence="1">Belongs to the FlgH family.</text>
</comment>
<sequence length="217" mass="23275">MRILLALTWLAWLGACTSIEQPRPDFADDDLPPIATAPAAGRSGGVFNAVTAWSLASDGRAYRPGDTLTVTLEETTQASKRADTKFGKNGDMAVKPGVLFGSTVPFDSSFGAKRNFDGGGSSSQQNTLRGEITVIVNQVLAGGLLQVKGEKVLSLNQGEEVMRLSGYVRQADIDTNNRVSSRRIANARIKYVGKGALSDSNSAGWLTRFFNSPWMPF</sequence>
<protein>
    <recommendedName>
        <fullName evidence="1">Flagellar L-ring protein 2</fullName>
    </recommendedName>
    <alternativeName>
        <fullName evidence="1">Basal body L-ring protein 2</fullName>
    </alternativeName>
</protein>
<accession>Q2T8V7</accession>
<name>FLGH2_BURTA</name>
<gene>
    <name evidence="1" type="primary">flgH2</name>
    <name type="ordered locus">BTH_II0190</name>
</gene>
<feature type="signal peptide" evidence="1">
    <location>
        <begin position="1"/>
        <end position="15"/>
    </location>
</feature>
<feature type="chain" id="PRO_0000236818" description="Flagellar L-ring protein 2">
    <location>
        <begin position="16"/>
        <end position="217"/>
    </location>
</feature>
<feature type="lipid moiety-binding region" description="N-palmitoyl cysteine" evidence="1">
    <location>
        <position position="16"/>
    </location>
</feature>
<feature type="lipid moiety-binding region" description="S-diacylglycerol cysteine" evidence="1">
    <location>
        <position position="16"/>
    </location>
</feature>